<sequence length="891" mass="100576">MFKNRLTPILFALFIIVPALTYLLAYYTDWLFFVETGFASVFTTKLYAQTGIGVLFGGLLFAFLVPNLLYANRAEFPHAGEYIEAGAIRLQRNQTLPMIRPIGVLIAAGIALFVGQFGALQWENVLLFINRVSVGTTDPVIGKDIGFYLFSLPLLEILRGYLNFMLLATLLVTLLVYYIRGGIALTLRGLLIAQQVRRHTAILLALFSCVIAAGFYLEGFGLLYGNKGAFYGAGYVDVNVRLTTLTTLAFITPVAGLLLAFGLWKGTWRLVLLPPIVVVAAYMIGMRGYPALLQKFKVAPNELALETPYIEHNINFTRFGYDLKKIETVPFDVDTRLSAAEIANNDATIKNIRLWDHAPLLKTYSQLQQIRTYYKFFDVDNDRYMVNGQYSQVMLSPRELSYADLPSKNWINERLIFTHGNGITMGPVSRISKEGLPEFYIKDIPAVSLADIKVTRPEIYFGELSNDYVIVKTRVPEFSYPTATGNINTTYNGKGGVAVDSLLKKALFAAHFRTEKIVLSSDITSESRILYNRNISKRVKKLAPFLRFDADPYMVVDDKGKLKWIIDAYTHSYRLPYSKPLKGGINYMRNSVKAVVDAYDGAVDFYISDPDDVLLKVYAKIFPALFKPMAAMPDGLKTHVRYSHQFLQVQAAMFSTYHMTDPKVFYNKENLWEIPVLGEKQMEPYYTIMKLPGEKKEEYILLLPFSPSKRDNLAAWLTARCDGENYGKIKAYTFPRDRLIYGPKQIDARINQDSYISQQLTLWNQRGSEVIRGSMLVIPIEKSLLYVQPLFLAADKSGLPELRRVIVAFGDEVVMEETLELALQRIFGGKRPAAATATQSTAPDAKALPSTLAKEAMSLYERAINMQRQGNWSGYGEELRKLEQVLKQLAK</sequence>
<accession>B3E4X5</accession>
<organism>
    <name type="scientific">Trichlorobacter lovleyi (strain ATCC BAA-1151 / DSM 17278 / SZ)</name>
    <name type="common">Geobacter lovleyi</name>
    <dbReference type="NCBI Taxonomy" id="398767"/>
    <lineage>
        <taxon>Bacteria</taxon>
        <taxon>Pseudomonadati</taxon>
        <taxon>Thermodesulfobacteriota</taxon>
        <taxon>Desulfuromonadia</taxon>
        <taxon>Geobacterales</taxon>
        <taxon>Geobacteraceae</taxon>
        <taxon>Trichlorobacter</taxon>
    </lineage>
</organism>
<comment type="subcellular location">
    <subcellularLocation>
        <location evidence="1">Cell membrane</location>
        <topology evidence="1">Multi-pass membrane protein</topology>
    </subcellularLocation>
</comment>
<comment type="similarity">
    <text evidence="1">Belongs to the UPF0182 family.</text>
</comment>
<dbReference type="EMBL" id="CP001089">
    <property type="protein sequence ID" value="ACD94540.1"/>
    <property type="molecule type" value="Genomic_DNA"/>
</dbReference>
<dbReference type="RefSeq" id="WP_012468896.1">
    <property type="nucleotide sequence ID" value="NC_010814.1"/>
</dbReference>
<dbReference type="SMR" id="B3E4X5"/>
<dbReference type="STRING" id="398767.Glov_0814"/>
<dbReference type="KEGG" id="glo:Glov_0814"/>
<dbReference type="eggNOG" id="COG1615">
    <property type="taxonomic scope" value="Bacteria"/>
</dbReference>
<dbReference type="HOGENOM" id="CLU_007733_0_0_7"/>
<dbReference type="OrthoDB" id="9763654at2"/>
<dbReference type="Proteomes" id="UP000002420">
    <property type="component" value="Chromosome"/>
</dbReference>
<dbReference type="GO" id="GO:0005576">
    <property type="term" value="C:extracellular region"/>
    <property type="evidence" value="ECO:0007669"/>
    <property type="project" value="TreeGrafter"/>
</dbReference>
<dbReference type="GO" id="GO:0005886">
    <property type="term" value="C:plasma membrane"/>
    <property type="evidence" value="ECO:0007669"/>
    <property type="project" value="UniProtKB-SubCell"/>
</dbReference>
<dbReference type="HAMAP" id="MF_01600">
    <property type="entry name" value="UPF0182"/>
    <property type="match status" value="1"/>
</dbReference>
<dbReference type="InterPro" id="IPR005372">
    <property type="entry name" value="UPF0182"/>
</dbReference>
<dbReference type="PANTHER" id="PTHR39344">
    <property type="entry name" value="UPF0182 PROTEIN SLL1060"/>
    <property type="match status" value="1"/>
</dbReference>
<dbReference type="PANTHER" id="PTHR39344:SF1">
    <property type="entry name" value="UPF0182 PROTEIN SLL1060"/>
    <property type="match status" value="1"/>
</dbReference>
<dbReference type="Pfam" id="PF03699">
    <property type="entry name" value="UPF0182"/>
    <property type="match status" value="1"/>
</dbReference>
<proteinExistence type="inferred from homology"/>
<protein>
    <recommendedName>
        <fullName evidence="1">UPF0182 protein Glov_0814</fullName>
    </recommendedName>
</protein>
<reference key="1">
    <citation type="submission" date="2008-05" db="EMBL/GenBank/DDBJ databases">
        <title>Complete sequence of chromosome of Geobacter lovleyi SZ.</title>
        <authorList>
            <consortium name="US DOE Joint Genome Institute"/>
            <person name="Lucas S."/>
            <person name="Copeland A."/>
            <person name="Lapidus A."/>
            <person name="Glavina del Rio T."/>
            <person name="Dalin E."/>
            <person name="Tice H."/>
            <person name="Bruce D."/>
            <person name="Goodwin L."/>
            <person name="Pitluck S."/>
            <person name="Chertkov O."/>
            <person name="Meincke L."/>
            <person name="Brettin T."/>
            <person name="Detter J.C."/>
            <person name="Han C."/>
            <person name="Tapia R."/>
            <person name="Kuske C.R."/>
            <person name="Schmutz J."/>
            <person name="Larimer F."/>
            <person name="Land M."/>
            <person name="Hauser L."/>
            <person name="Kyrpides N."/>
            <person name="Mikhailova N."/>
            <person name="Sung Y."/>
            <person name="Fletcher K.E."/>
            <person name="Ritalahti K.M."/>
            <person name="Loeffler F.E."/>
            <person name="Richardson P."/>
        </authorList>
    </citation>
    <scope>NUCLEOTIDE SEQUENCE [LARGE SCALE GENOMIC DNA]</scope>
    <source>
        <strain>ATCC BAA-1151 / DSM 17278 / SZ</strain>
    </source>
</reference>
<name>Y814_TRIL1</name>
<feature type="chain" id="PRO_1000148059" description="UPF0182 protein Glov_0814">
    <location>
        <begin position="1"/>
        <end position="891"/>
    </location>
</feature>
<feature type="transmembrane region" description="Helical" evidence="1">
    <location>
        <begin position="6"/>
        <end position="26"/>
    </location>
</feature>
<feature type="transmembrane region" description="Helical" evidence="1">
    <location>
        <begin position="51"/>
        <end position="71"/>
    </location>
</feature>
<feature type="transmembrane region" description="Helical" evidence="1">
    <location>
        <begin position="102"/>
        <end position="122"/>
    </location>
</feature>
<feature type="transmembrane region" description="Helical" evidence="1">
    <location>
        <begin position="164"/>
        <end position="184"/>
    </location>
</feature>
<feature type="transmembrane region" description="Helical" evidence="1">
    <location>
        <begin position="202"/>
        <end position="222"/>
    </location>
</feature>
<feature type="transmembrane region" description="Helical" evidence="1">
    <location>
        <begin position="244"/>
        <end position="264"/>
    </location>
</feature>
<feature type="transmembrane region" description="Helical" evidence="1">
    <location>
        <begin position="266"/>
        <end position="286"/>
    </location>
</feature>
<gene>
    <name type="ordered locus">Glov_0814</name>
</gene>
<evidence type="ECO:0000255" key="1">
    <source>
        <dbReference type="HAMAP-Rule" id="MF_01600"/>
    </source>
</evidence>
<keyword id="KW-1003">Cell membrane</keyword>
<keyword id="KW-0472">Membrane</keyword>
<keyword id="KW-1185">Reference proteome</keyword>
<keyword id="KW-0812">Transmembrane</keyword>
<keyword id="KW-1133">Transmembrane helix</keyword>